<reference key="1">
    <citation type="journal article" date="2006" name="Genome Biol.">
        <title>Genomic analysis reveals that Pseudomonas aeruginosa virulence is combinatorial.</title>
        <authorList>
            <person name="Lee D.G."/>
            <person name="Urbach J.M."/>
            <person name="Wu G."/>
            <person name="Liberati N.T."/>
            <person name="Feinbaum R.L."/>
            <person name="Miyata S."/>
            <person name="Diggins L.T."/>
            <person name="He J."/>
            <person name="Saucier M."/>
            <person name="Deziel E."/>
            <person name="Friedman L."/>
            <person name="Li L."/>
            <person name="Grills G."/>
            <person name="Montgomery K."/>
            <person name="Kucherlapati R."/>
            <person name="Rahme L.G."/>
            <person name="Ausubel F.M."/>
        </authorList>
    </citation>
    <scope>NUCLEOTIDE SEQUENCE [LARGE SCALE GENOMIC DNA]</scope>
    <source>
        <strain>UCBPP-PA14</strain>
    </source>
</reference>
<organism>
    <name type="scientific">Pseudomonas aeruginosa (strain UCBPP-PA14)</name>
    <dbReference type="NCBI Taxonomy" id="208963"/>
    <lineage>
        <taxon>Bacteria</taxon>
        <taxon>Pseudomonadati</taxon>
        <taxon>Pseudomonadota</taxon>
        <taxon>Gammaproteobacteria</taxon>
        <taxon>Pseudomonadales</taxon>
        <taxon>Pseudomonadaceae</taxon>
        <taxon>Pseudomonas</taxon>
    </lineage>
</organism>
<sequence>MPEPTFHELAQLPPPVLRQLIRRGDYAGHTSGLGQRHLQANLVILQKSWADEFLRFCALNPRACPLLDVSEPGSPHFARLGADIDVRSDLPRYRVHRRGQEPVEVNDIGAFWEADFVAFAIGCSFSFEQALLDAGIGLRHLELGRNVAMYRTAIATRPSGRLAGPTVVSMRPLKAAEAIRAIQITSRFPMTHGAPLHLGDPALIGIRDLARPDYGDPVPLAADEIPLFWACGVTPQAVLAEAQPELYISHAPGHMLVSDRLYDEL</sequence>
<protein>
    <recommendedName>
        <fullName evidence="1">Putative hydro-lyase PA14_37210</fullName>
        <ecNumber evidence="1">4.2.1.-</ecNumber>
    </recommendedName>
</protein>
<accession>Q02LQ6</accession>
<comment type="similarity">
    <text evidence="1">Belongs to the D-glutamate cyclase family.</text>
</comment>
<name>Y3721_PSEAB</name>
<feature type="chain" id="PRO_1000070413" description="Putative hydro-lyase PA14_37210">
    <location>
        <begin position="1"/>
        <end position="265"/>
    </location>
</feature>
<keyword id="KW-0456">Lyase</keyword>
<evidence type="ECO:0000255" key="1">
    <source>
        <dbReference type="HAMAP-Rule" id="MF_01830"/>
    </source>
</evidence>
<dbReference type="EC" id="4.2.1.-" evidence="1"/>
<dbReference type="EMBL" id="CP000438">
    <property type="protein sequence ID" value="ABJ11292.1"/>
    <property type="molecule type" value="Genomic_DNA"/>
</dbReference>
<dbReference type="RefSeq" id="WP_003132222.1">
    <property type="nucleotide sequence ID" value="NZ_CP034244.1"/>
</dbReference>
<dbReference type="SMR" id="Q02LQ6"/>
<dbReference type="KEGG" id="pau:PA14_37210"/>
<dbReference type="PseudoCAP" id="PA14_37210"/>
<dbReference type="HOGENOM" id="CLU_059759_0_0_6"/>
<dbReference type="BioCyc" id="PAER208963:G1G74-3132-MONOMER"/>
<dbReference type="Proteomes" id="UP000000653">
    <property type="component" value="Chromosome"/>
</dbReference>
<dbReference type="GO" id="GO:0016829">
    <property type="term" value="F:lyase activity"/>
    <property type="evidence" value="ECO:0007669"/>
    <property type="project" value="UniProtKB-KW"/>
</dbReference>
<dbReference type="FunFam" id="3.30.2040.10:FF:000001">
    <property type="entry name" value="D-glutamate cyclase, mitochondrial"/>
    <property type="match status" value="1"/>
</dbReference>
<dbReference type="Gene3D" id="3.40.1640.10">
    <property type="entry name" value="PSTPO5379-like"/>
    <property type="match status" value="1"/>
</dbReference>
<dbReference type="Gene3D" id="3.30.2040.10">
    <property type="entry name" value="PSTPO5379-like domain"/>
    <property type="match status" value="1"/>
</dbReference>
<dbReference type="HAMAP" id="MF_01830">
    <property type="entry name" value="Hydro_lyase"/>
    <property type="match status" value="1"/>
</dbReference>
<dbReference type="InterPro" id="IPR009906">
    <property type="entry name" value="D-Glu_cyclase"/>
</dbReference>
<dbReference type="InterPro" id="IPR038021">
    <property type="entry name" value="Putative_hydro-lyase"/>
</dbReference>
<dbReference type="InterPro" id="IPR016938">
    <property type="entry name" value="UPF0317"/>
</dbReference>
<dbReference type="NCBIfam" id="NF003969">
    <property type="entry name" value="PRK05463.1"/>
    <property type="match status" value="1"/>
</dbReference>
<dbReference type="PANTHER" id="PTHR32022">
    <property type="entry name" value="D-GLUTAMATE CYCLASE, MITOCHONDRIAL"/>
    <property type="match status" value="1"/>
</dbReference>
<dbReference type="PANTHER" id="PTHR32022:SF10">
    <property type="entry name" value="D-GLUTAMATE CYCLASE, MITOCHONDRIAL"/>
    <property type="match status" value="1"/>
</dbReference>
<dbReference type="Pfam" id="PF07286">
    <property type="entry name" value="D-Glu_cyclase"/>
    <property type="match status" value="1"/>
</dbReference>
<dbReference type="PIRSF" id="PIRSF029755">
    <property type="entry name" value="UCP029755"/>
    <property type="match status" value="1"/>
</dbReference>
<dbReference type="SUPFAM" id="SSF160920">
    <property type="entry name" value="PSTPO5379-like"/>
    <property type="match status" value="1"/>
</dbReference>
<gene>
    <name type="ordered locus">PA14_37210</name>
</gene>
<proteinExistence type="inferred from homology"/>